<protein>
    <recommendedName>
        <fullName>Putative cfxQ-like protein R730</fullName>
    </recommendedName>
</protein>
<sequence length="406" mass="46782">MKRSHDSITRSINSDNDSETNMNSDNNNNNKPNQRKKINLNKKPSIFFIFDDLTDYETENKETTTIPPICHGIHCDHDPNSCIVPIIPDKFNNMTRLNLDNLIELGELFHCKLQKNFRNIPLERLAILRESLLKLNKTIGMNSIKESICEQLIYFLMDLEPNPQEMLHTVIQGPPGVGKSYVIDILAEIYLKMGYLSNGKINKVKLDELKGKYIGHSAPLTQKAIDNSIGGVLVLDEVYAIGNSDHLDSFSKEVIDTINRNLTEKAGKFVCIIAGYGEQIDKCFFAHNEGLRSRFRFRFSIDSYTPEELFEIFKLKVENDKWKLSESEINLITDFFRFNRDKFPYFGRDIETLLFHTKVAHSNRIVYNDNSGLNKTINLLDIKQGFAKFSLNNKETSNNDFNLMYL</sequence>
<evidence type="ECO:0000255" key="1"/>
<evidence type="ECO:0000256" key="2">
    <source>
        <dbReference type="SAM" id="MobiDB-lite"/>
    </source>
</evidence>
<evidence type="ECO:0000305" key="3"/>
<keyword id="KW-0067">ATP-binding</keyword>
<keyword id="KW-0547">Nucleotide-binding</keyword>
<keyword id="KW-1185">Reference proteome</keyword>
<name>CFXQ_MIMIV</name>
<organism>
    <name type="scientific">Acanthamoeba polyphaga mimivirus</name>
    <name type="common">APMV</name>
    <dbReference type="NCBI Taxonomy" id="212035"/>
    <lineage>
        <taxon>Viruses</taxon>
        <taxon>Varidnaviria</taxon>
        <taxon>Bamfordvirae</taxon>
        <taxon>Nucleocytoviricota</taxon>
        <taxon>Megaviricetes</taxon>
        <taxon>Imitervirales</taxon>
        <taxon>Mimiviridae</taxon>
        <taxon>Megamimivirinae</taxon>
        <taxon>Mimivirus</taxon>
        <taxon>Mimivirus bradfordmassiliense</taxon>
    </lineage>
</organism>
<comment type="similarity">
    <text evidence="3">Belongs to the CbxX/CfxQ family.</text>
</comment>
<feature type="chain" id="PRO_0000247262" description="Putative cfxQ-like protein R730">
    <location>
        <begin position="1"/>
        <end position="406"/>
    </location>
</feature>
<feature type="region of interest" description="Disordered" evidence="2">
    <location>
        <begin position="1"/>
        <end position="37"/>
    </location>
</feature>
<feature type="compositionally biased region" description="Low complexity" evidence="2">
    <location>
        <begin position="13"/>
        <end position="32"/>
    </location>
</feature>
<feature type="binding site" evidence="1">
    <location>
        <begin position="173"/>
        <end position="180"/>
    </location>
    <ligand>
        <name>ATP</name>
        <dbReference type="ChEBI" id="CHEBI:30616"/>
    </ligand>
</feature>
<gene>
    <name type="ordered locus">MIMI_R730</name>
</gene>
<reference key="1">
    <citation type="journal article" date="2004" name="Science">
        <title>The 1.2-megabase genome sequence of Mimivirus.</title>
        <authorList>
            <person name="Raoult D."/>
            <person name="Audic S."/>
            <person name="Robert C."/>
            <person name="Abergel C."/>
            <person name="Renesto P."/>
            <person name="Ogata H."/>
            <person name="La Scola B."/>
            <person name="Susan M."/>
            <person name="Claverie J.-M."/>
        </authorList>
    </citation>
    <scope>NUCLEOTIDE SEQUENCE [LARGE SCALE GENOMIC DNA]</scope>
    <source>
        <strain>Rowbotham-Bradford</strain>
    </source>
</reference>
<proteinExistence type="inferred from homology"/>
<accession>Q5UNY2</accession>
<organismHost>
    <name type="scientific">Acanthamoeba polyphaga</name>
    <name type="common">Amoeba</name>
    <dbReference type="NCBI Taxonomy" id="5757"/>
</organismHost>
<dbReference type="EMBL" id="AY653733">
    <property type="protein sequence ID" value="AAV50990.1"/>
    <property type="molecule type" value="Genomic_DNA"/>
</dbReference>
<dbReference type="SMR" id="Q5UNY2"/>
<dbReference type="KEGG" id="vg:9925384"/>
<dbReference type="OrthoDB" id="16526at10239"/>
<dbReference type="Proteomes" id="UP000001134">
    <property type="component" value="Genome"/>
</dbReference>
<dbReference type="GO" id="GO:0005524">
    <property type="term" value="F:ATP binding"/>
    <property type="evidence" value="ECO:0007669"/>
    <property type="project" value="UniProtKB-KW"/>
</dbReference>
<dbReference type="GO" id="GO:0016887">
    <property type="term" value="F:ATP hydrolysis activity"/>
    <property type="evidence" value="ECO:0007669"/>
    <property type="project" value="InterPro"/>
</dbReference>
<dbReference type="Gene3D" id="1.10.8.60">
    <property type="match status" value="1"/>
</dbReference>
<dbReference type="Gene3D" id="3.40.50.300">
    <property type="entry name" value="P-loop containing nucleotide triphosphate hydrolases"/>
    <property type="match status" value="1"/>
</dbReference>
<dbReference type="InterPro" id="IPR003959">
    <property type="entry name" value="ATPase_AAA_core"/>
</dbReference>
<dbReference type="InterPro" id="IPR000641">
    <property type="entry name" value="CbxX/CfxQ"/>
</dbReference>
<dbReference type="InterPro" id="IPR050773">
    <property type="entry name" value="CbxX/CfxQ_RuBisCO_ESX"/>
</dbReference>
<dbReference type="InterPro" id="IPR027417">
    <property type="entry name" value="P-loop_NTPase"/>
</dbReference>
<dbReference type="PANTHER" id="PTHR43392">
    <property type="entry name" value="AAA-TYPE ATPASE FAMILY PROTEIN / ANKYRIN REPEAT FAMILY PROTEIN"/>
    <property type="match status" value="1"/>
</dbReference>
<dbReference type="PANTHER" id="PTHR43392:SF2">
    <property type="entry name" value="AAA-TYPE ATPASE FAMILY PROTEIN _ ANKYRIN REPEAT FAMILY PROTEIN"/>
    <property type="match status" value="1"/>
</dbReference>
<dbReference type="Pfam" id="PF00004">
    <property type="entry name" value="AAA"/>
    <property type="match status" value="1"/>
</dbReference>
<dbReference type="PRINTS" id="PR00819">
    <property type="entry name" value="CBXCFQXSUPER"/>
</dbReference>
<dbReference type="SUPFAM" id="SSF52540">
    <property type="entry name" value="P-loop containing nucleoside triphosphate hydrolases"/>
    <property type="match status" value="1"/>
</dbReference>